<proteinExistence type="uncertain"/>
<feature type="chain" id="PRO_0000202997" description="Putative uncharacterized protein YIL028W">
    <location>
        <begin position="1"/>
        <end position="132"/>
    </location>
</feature>
<dbReference type="EMBL" id="Z46881">
    <property type="protein sequence ID" value="CAA86963.1"/>
    <property type="molecule type" value="Genomic_DNA"/>
</dbReference>
<dbReference type="PIR" id="S49953">
    <property type="entry name" value="S49953"/>
</dbReference>
<dbReference type="DIP" id="DIP-1877N"/>
<dbReference type="IntAct" id="P40539">
    <property type="interactions" value="2"/>
</dbReference>
<dbReference type="MINT" id="P40539"/>
<dbReference type="STRING" id="4932.YIL028W"/>
<dbReference type="PaxDb" id="4932-YIL028W"/>
<dbReference type="EnsemblFungi" id="YIL028W_mRNA">
    <property type="protein sequence ID" value="YIL028W"/>
    <property type="gene ID" value="YIL028W"/>
</dbReference>
<dbReference type="AGR" id="SGD:S000001290"/>
<dbReference type="SGD" id="S000001290">
    <property type="gene designation" value="YIL028W"/>
</dbReference>
<dbReference type="HOGENOM" id="CLU_1918708_0_0_1"/>
<reference key="1">
    <citation type="journal article" date="1997" name="Nature">
        <title>The nucleotide sequence of Saccharomyces cerevisiae chromosome IX.</title>
        <authorList>
            <person name="Churcher C.M."/>
            <person name="Bowman S."/>
            <person name="Badcock K."/>
            <person name="Bankier A.T."/>
            <person name="Brown D."/>
            <person name="Chillingworth T."/>
            <person name="Connor R."/>
            <person name="Devlin K."/>
            <person name="Gentles S."/>
            <person name="Hamlin N."/>
            <person name="Harris D.E."/>
            <person name="Horsnell T."/>
            <person name="Hunt S."/>
            <person name="Jagels K."/>
            <person name="Jones M."/>
            <person name="Lye G."/>
            <person name="Moule S."/>
            <person name="Odell C."/>
            <person name="Pearson D."/>
            <person name="Rajandream M.A."/>
            <person name="Rice P."/>
            <person name="Rowley N."/>
            <person name="Skelton J."/>
            <person name="Smith V."/>
            <person name="Walsh S.V."/>
            <person name="Whitehead S."/>
            <person name="Barrell B.G."/>
        </authorList>
    </citation>
    <scope>NUCLEOTIDE SEQUENCE [LARGE SCALE GENOMIC DNA]</scope>
    <source>
        <strain>ATCC 204508 / S288c</strain>
    </source>
</reference>
<reference key="2">
    <citation type="journal article" date="2014" name="G3 (Bethesda)">
        <title>The reference genome sequence of Saccharomyces cerevisiae: Then and now.</title>
        <authorList>
            <person name="Engel S.R."/>
            <person name="Dietrich F.S."/>
            <person name="Fisk D.G."/>
            <person name="Binkley G."/>
            <person name="Balakrishnan R."/>
            <person name="Costanzo M.C."/>
            <person name="Dwight S.S."/>
            <person name="Hitz B.C."/>
            <person name="Karra K."/>
            <person name="Nash R.S."/>
            <person name="Weng S."/>
            <person name="Wong E.D."/>
            <person name="Lloyd P."/>
            <person name="Skrzypek M.S."/>
            <person name="Miyasato S.R."/>
            <person name="Simison M."/>
            <person name="Cherry J.M."/>
        </authorList>
    </citation>
    <scope>GENOME REANNOTATION</scope>
    <source>
        <strain>ATCC 204508 / S288c</strain>
    </source>
</reference>
<organism>
    <name type="scientific">Saccharomyces cerevisiae (strain ATCC 204508 / S288c)</name>
    <name type="common">Baker's yeast</name>
    <dbReference type="NCBI Taxonomy" id="559292"/>
    <lineage>
        <taxon>Eukaryota</taxon>
        <taxon>Fungi</taxon>
        <taxon>Dikarya</taxon>
        <taxon>Ascomycota</taxon>
        <taxon>Saccharomycotina</taxon>
        <taxon>Saccharomycetes</taxon>
        <taxon>Saccharomycetales</taxon>
        <taxon>Saccharomycetaceae</taxon>
        <taxon>Saccharomyces</taxon>
    </lineage>
</organism>
<name>YIC8_YEAST</name>
<accession>P40539</accession>
<evidence type="ECO:0000305" key="1">
    <source>
    </source>
</evidence>
<comment type="caution">
    <text evidence="1">Product of a dubious gene prediction unlikely to encode a functional protein. Because of that it is not part of the S.cerevisiae S288c complete/reference proteome set.</text>
</comment>
<sequence length="132" mass="14952">MDDARLFRRVVCMPFPMIMLVALYRNVLGRDSTVDCSFDVILTPWIMASMFSKRMVNWSNPRQAVLKVCSAAVTSRIVANWLFTMNILYTSGEKGFYSLATAVVIKTVTDGFTVIRVFSIHLNESVYSKPLP</sequence>
<protein>
    <recommendedName>
        <fullName>Putative uncharacterized protein YIL028W</fullName>
    </recommendedName>
</protein>
<gene>
    <name type="ordered locus">YIL028W</name>
</gene>